<comment type="tissue specificity">
    <text evidence="1">Nacreous layer of shell.</text>
</comment>
<reference key="1">
    <citation type="journal article" date="2009" name="ChemBioChem">
        <title>Evolution of nacre: biochemistry and 'shellomics' of the shell organic matrix of the cephalopod Nautilus macromphalus.</title>
        <authorList>
            <person name="Marie B."/>
            <person name="Marin F."/>
            <person name="Marie A."/>
            <person name="Bedouet L."/>
            <person name="Dubost L."/>
            <person name="Alcaraz G."/>
            <person name="Milet C."/>
            <person name="Luquet G."/>
        </authorList>
    </citation>
    <scope>PROTEIN SEQUENCE</scope>
    <scope>TISSUE SPECIFICITY</scope>
    <source>
        <tissue>Shell</tissue>
    </source>
</reference>
<organism>
    <name type="scientific">Nautilus macromphalus</name>
    <name type="common">Bellybutton nautilus</name>
    <dbReference type="NCBI Taxonomy" id="34576"/>
    <lineage>
        <taxon>Eukaryota</taxon>
        <taxon>Metazoa</taxon>
        <taxon>Spiralia</taxon>
        <taxon>Lophotrochozoa</taxon>
        <taxon>Mollusca</taxon>
        <taxon>Cephalopoda</taxon>
        <taxon>Nautiloidea</taxon>
        <taxon>Nautilida</taxon>
        <taxon>Nautilidae</taxon>
        <taxon>Nautilus</taxon>
    </lineage>
</organism>
<feature type="chain" id="PRO_0000371475" description="Uncharacterized protein IMPP14">
    <location>
        <begin position="1" status="less than"/>
        <end position="16" status="greater than"/>
    </location>
</feature>
<feature type="non-terminal residue" evidence="2">
    <location>
        <position position="1"/>
    </location>
</feature>
<feature type="non-terminal residue" evidence="2">
    <location>
        <position position="16"/>
    </location>
</feature>
<name>IMP14_NAUMA</name>
<proteinExistence type="evidence at protein level"/>
<accession>P85371</accession>
<keyword id="KW-0903">Direct protein sequencing</keyword>
<protein>
    <recommendedName>
        <fullName evidence="2">Uncharacterized protein IMPP14</fullName>
    </recommendedName>
</protein>
<sequence>VTAKAVAAAEAASSAR</sequence>
<evidence type="ECO:0000269" key="1">
    <source>
    </source>
</evidence>
<evidence type="ECO:0000303" key="2">
    <source>
    </source>
</evidence>